<feature type="chain" id="PRO_1000008895" description="Elongation factor G">
    <location>
        <begin position="1"/>
        <end position="691"/>
    </location>
</feature>
<feature type="domain" description="tr-type G">
    <location>
        <begin position="8"/>
        <end position="282"/>
    </location>
</feature>
<feature type="binding site" evidence="1">
    <location>
        <begin position="17"/>
        <end position="24"/>
    </location>
    <ligand>
        <name>GTP</name>
        <dbReference type="ChEBI" id="CHEBI:37565"/>
    </ligand>
</feature>
<feature type="binding site" evidence="1">
    <location>
        <begin position="81"/>
        <end position="85"/>
    </location>
    <ligand>
        <name>GTP</name>
        <dbReference type="ChEBI" id="CHEBI:37565"/>
    </ligand>
</feature>
<feature type="binding site" evidence="1">
    <location>
        <begin position="135"/>
        <end position="138"/>
    </location>
    <ligand>
        <name>GTP</name>
        <dbReference type="ChEBI" id="CHEBI:37565"/>
    </ligand>
</feature>
<gene>
    <name evidence="1" type="primary">fusA</name>
    <name type="ordered locus">SynRCC307_2169</name>
</gene>
<accession>A5GW13</accession>
<name>EFG_SYNR3</name>
<sequence length="691" mass="75272">MPRDFPLDRVRNIGIAAHIDAGKTTTTERILFYSGVVHKIGEVHDGAAVTDWMAQERERGITITAAAISTAWNDHRINIIDTPGHVDFTIEVERSMRVLDGVIAVFCAVGGVQPQSETVWRQADRYSVPRMVFVNKMDRTGADFLKVYGQIVDRLKAKAAPIQLPIGAEGDLSGIIDLVANKAYIYKNDLGTDIEEAEIPADMADEAAEWRAKLMESVAENDEELIEKFLETGELTEAELKKGIRDGVLKHGLVPMLCGSAFKNKGVQLVLDAVVDYLPAPIDVPPIQGVLADGSEAVRPSDDNAPFSALAFKVMADPYGKLTFVRMYSGVLSKGSYVMNSTKDVKERISRLVVLKADDREEVDQLRAGDLGAVLGLKNTTTGDTLCDPDNSIVLETLFIPEPVISVAVEPKTKGDMEKLSKALTSLSEEDPTFRVSTDEETGQTVIAGMGELHLEILVDRMLREFKVEANIGAPQVSYRETIRSSSKGEGKFARQTGGKGQYGHVVIEMEPGEPGTGFEFINKIVGGAVPKEFIKPAEMGMKETCESGVIAGFPLIDVKCTMVDGSYHDVDSSEMAFKIAGSMAFKDGVKKCNPVLLEPMMKVEVEVPEDFLGSIIGDLSSRRGQVEGQSIDDGISKVSAKVPLAEMFGYATQLRSMTQGRGIFSMEFSRYEEVPRNVAEAIISKNQGNS</sequence>
<protein>
    <recommendedName>
        <fullName evidence="1">Elongation factor G</fullName>
        <shortName evidence="1">EF-G</shortName>
    </recommendedName>
</protein>
<reference key="1">
    <citation type="submission" date="2006-05" db="EMBL/GenBank/DDBJ databases">
        <authorList>
            <consortium name="Genoscope"/>
        </authorList>
    </citation>
    <scope>NUCLEOTIDE SEQUENCE [LARGE SCALE GENOMIC DNA]</scope>
    <source>
        <strain>RCC307</strain>
    </source>
</reference>
<keyword id="KW-0963">Cytoplasm</keyword>
<keyword id="KW-0251">Elongation factor</keyword>
<keyword id="KW-0342">GTP-binding</keyword>
<keyword id="KW-0547">Nucleotide-binding</keyword>
<keyword id="KW-0648">Protein biosynthesis</keyword>
<keyword id="KW-1185">Reference proteome</keyword>
<comment type="function">
    <text evidence="1">Catalyzes the GTP-dependent ribosomal translocation step during translation elongation. During this step, the ribosome changes from the pre-translocational (PRE) to the post-translocational (POST) state as the newly formed A-site-bound peptidyl-tRNA and P-site-bound deacylated tRNA move to the P and E sites, respectively. Catalyzes the coordinated movement of the two tRNA molecules, the mRNA and conformational changes in the ribosome.</text>
</comment>
<comment type="subcellular location">
    <subcellularLocation>
        <location evidence="1">Cytoplasm</location>
    </subcellularLocation>
</comment>
<comment type="similarity">
    <text evidence="1">Belongs to the TRAFAC class translation factor GTPase superfamily. Classic translation factor GTPase family. EF-G/EF-2 subfamily.</text>
</comment>
<proteinExistence type="inferred from homology"/>
<evidence type="ECO:0000255" key="1">
    <source>
        <dbReference type="HAMAP-Rule" id="MF_00054"/>
    </source>
</evidence>
<organism>
    <name type="scientific">Synechococcus sp. (strain RCC307)</name>
    <dbReference type="NCBI Taxonomy" id="316278"/>
    <lineage>
        <taxon>Bacteria</taxon>
        <taxon>Bacillati</taxon>
        <taxon>Cyanobacteriota</taxon>
        <taxon>Cyanophyceae</taxon>
        <taxon>Synechococcales</taxon>
        <taxon>Synechococcaceae</taxon>
        <taxon>Synechococcus</taxon>
    </lineage>
</organism>
<dbReference type="EMBL" id="CT978603">
    <property type="protein sequence ID" value="CAK29072.1"/>
    <property type="molecule type" value="Genomic_DNA"/>
</dbReference>
<dbReference type="SMR" id="A5GW13"/>
<dbReference type="STRING" id="316278.SynRCC307_2169"/>
<dbReference type="KEGG" id="syr:SynRCC307_2169"/>
<dbReference type="eggNOG" id="COG0480">
    <property type="taxonomic scope" value="Bacteria"/>
</dbReference>
<dbReference type="HOGENOM" id="CLU_002794_4_1_3"/>
<dbReference type="OrthoDB" id="580826at2"/>
<dbReference type="Proteomes" id="UP000001115">
    <property type="component" value="Chromosome"/>
</dbReference>
<dbReference type="GO" id="GO:0005737">
    <property type="term" value="C:cytoplasm"/>
    <property type="evidence" value="ECO:0007669"/>
    <property type="project" value="UniProtKB-SubCell"/>
</dbReference>
<dbReference type="GO" id="GO:0005525">
    <property type="term" value="F:GTP binding"/>
    <property type="evidence" value="ECO:0007669"/>
    <property type="project" value="UniProtKB-UniRule"/>
</dbReference>
<dbReference type="GO" id="GO:0003924">
    <property type="term" value="F:GTPase activity"/>
    <property type="evidence" value="ECO:0007669"/>
    <property type="project" value="InterPro"/>
</dbReference>
<dbReference type="GO" id="GO:0003746">
    <property type="term" value="F:translation elongation factor activity"/>
    <property type="evidence" value="ECO:0007669"/>
    <property type="project" value="UniProtKB-UniRule"/>
</dbReference>
<dbReference type="GO" id="GO:0032790">
    <property type="term" value="P:ribosome disassembly"/>
    <property type="evidence" value="ECO:0007669"/>
    <property type="project" value="TreeGrafter"/>
</dbReference>
<dbReference type="CDD" id="cd01886">
    <property type="entry name" value="EF-G"/>
    <property type="match status" value="1"/>
</dbReference>
<dbReference type="CDD" id="cd16262">
    <property type="entry name" value="EFG_III"/>
    <property type="match status" value="1"/>
</dbReference>
<dbReference type="CDD" id="cd01434">
    <property type="entry name" value="EFG_mtEFG1_IV"/>
    <property type="match status" value="1"/>
</dbReference>
<dbReference type="CDD" id="cd03713">
    <property type="entry name" value="EFG_mtEFG_C"/>
    <property type="match status" value="1"/>
</dbReference>
<dbReference type="CDD" id="cd04088">
    <property type="entry name" value="EFG_mtEFG_II"/>
    <property type="match status" value="1"/>
</dbReference>
<dbReference type="FunFam" id="2.40.30.10:FF:000006">
    <property type="entry name" value="Elongation factor G"/>
    <property type="match status" value="1"/>
</dbReference>
<dbReference type="FunFam" id="3.30.230.10:FF:000003">
    <property type="entry name" value="Elongation factor G"/>
    <property type="match status" value="1"/>
</dbReference>
<dbReference type="FunFam" id="3.30.70.240:FF:000001">
    <property type="entry name" value="Elongation factor G"/>
    <property type="match status" value="1"/>
</dbReference>
<dbReference type="FunFam" id="3.30.70.870:FF:000001">
    <property type="entry name" value="Elongation factor G"/>
    <property type="match status" value="1"/>
</dbReference>
<dbReference type="FunFam" id="3.40.50.300:FF:000029">
    <property type="entry name" value="Elongation factor G"/>
    <property type="match status" value="1"/>
</dbReference>
<dbReference type="Gene3D" id="3.30.230.10">
    <property type="match status" value="1"/>
</dbReference>
<dbReference type="Gene3D" id="3.30.70.240">
    <property type="match status" value="1"/>
</dbReference>
<dbReference type="Gene3D" id="3.30.70.870">
    <property type="entry name" value="Elongation Factor G (Translational Gtpase), domain 3"/>
    <property type="match status" value="1"/>
</dbReference>
<dbReference type="Gene3D" id="3.40.50.300">
    <property type="entry name" value="P-loop containing nucleotide triphosphate hydrolases"/>
    <property type="match status" value="1"/>
</dbReference>
<dbReference type="Gene3D" id="2.40.30.10">
    <property type="entry name" value="Translation factors"/>
    <property type="match status" value="1"/>
</dbReference>
<dbReference type="HAMAP" id="MF_00054_B">
    <property type="entry name" value="EF_G_EF_2_B"/>
    <property type="match status" value="1"/>
</dbReference>
<dbReference type="InterPro" id="IPR041095">
    <property type="entry name" value="EFG_II"/>
</dbReference>
<dbReference type="InterPro" id="IPR009022">
    <property type="entry name" value="EFG_III"/>
</dbReference>
<dbReference type="InterPro" id="IPR035647">
    <property type="entry name" value="EFG_III/V"/>
</dbReference>
<dbReference type="InterPro" id="IPR047872">
    <property type="entry name" value="EFG_IV"/>
</dbReference>
<dbReference type="InterPro" id="IPR035649">
    <property type="entry name" value="EFG_V"/>
</dbReference>
<dbReference type="InterPro" id="IPR000640">
    <property type="entry name" value="EFG_V-like"/>
</dbReference>
<dbReference type="InterPro" id="IPR004161">
    <property type="entry name" value="EFTu-like_2"/>
</dbReference>
<dbReference type="InterPro" id="IPR031157">
    <property type="entry name" value="G_TR_CS"/>
</dbReference>
<dbReference type="InterPro" id="IPR027417">
    <property type="entry name" value="P-loop_NTPase"/>
</dbReference>
<dbReference type="InterPro" id="IPR020568">
    <property type="entry name" value="Ribosomal_Su5_D2-typ_SF"/>
</dbReference>
<dbReference type="InterPro" id="IPR014721">
    <property type="entry name" value="Ribsml_uS5_D2-typ_fold_subgr"/>
</dbReference>
<dbReference type="InterPro" id="IPR005225">
    <property type="entry name" value="Small_GTP-bd"/>
</dbReference>
<dbReference type="InterPro" id="IPR000795">
    <property type="entry name" value="T_Tr_GTP-bd_dom"/>
</dbReference>
<dbReference type="InterPro" id="IPR009000">
    <property type="entry name" value="Transl_B-barrel_sf"/>
</dbReference>
<dbReference type="InterPro" id="IPR004540">
    <property type="entry name" value="Transl_elong_EFG/EF2"/>
</dbReference>
<dbReference type="InterPro" id="IPR005517">
    <property type="entry name" value="Transl_elong_EFG/EF2_IV"/>
</dbReference>
<dbReference type="NCBIfam" id="TIGR00484">
    <property type="entry name" value="EF-G"/>
    <property type="match status" value="1"/>
</dbReference>
<dbReference type="NCBIfam" id="NF009379">
    <property type="entry name" value="PRK12740.1-3"/>
    <property type="match status" value="1"/>
</dbReference>
<dbReference type="NCBIfam" id="NF009381">
    <property type="entry name" value="PRK12740.1-5"/>
    <property type="match status" value="1"/>
</dbReference>
<dbReference type="NCBIfam" id="TIGR00231">
    <property type="entry name" value="small_GTP"/>
    <property type="match status" value="1"/>
</dbReference>
<dbReference type="PANTHER" id="PTHR43261:SF1">
    <property type="entry name" value="RIBOSOME-RELEASING FACTOR 2, MITOCHONDRIAL"/>
    <property type="match status" value="1"/>
</dbReference>
<dbReference type="PANTHER" id="PTHR43261">
    <property type="entry name" value="TRANSLATION ELONGATION FACTOR G-RELATED"/>
    <property type="match status" value="1"/>
</dbReference>
<dbReference type="Pfam" id="PF00679">
    <property type="entry name" value="EFG_C"/>
    <property type="match status" value="1"/>
</dbReference>
<dbReference type="Pfam" id="PF14492">
    <property type="entry name" value="EFG_III"/>
    <property type="match status" value="1"/>
</dbReference>
<dbReference type="Pfam" id="PF03764">
    <property type="entry name" value="EFG_IV"/>
    <property type="match status" value="1"/>
</dbReference>
<dbReference type="Pfam" id="PF00009">
    <property type="entry name" value="GTP_EFTU"/>
    <property type="match status" value="1"/>
</dbReference>
<dbReference type="Pfam" id="PF03144">
    <property type="entry name" value="GTP_EFTU_D2"/>
    <property type="match status" value="1"/>
</dbReference>
<dbReference type="PRINTS" id="PR00315">
    <property type="entry name" value="ELONGATNFCT"/>
</dbReference>
<dbReference type="SMART" id="SM00838">
    <property type="entry name" value="EFG_C"/>
    <property type="match status" value="1"/>
</dbReference>
<dbReference type="SMART" id="SM00889">
    <property type="entry name" value="EFG_IV"/>
    <property type="match status" value="1"/>
</dbReference>
<dbReference type="SUPFAM" id="SSF54980">
    <property type="entry name" value="EF-G C-terminal domain-like"/>
    <property type="match status" value="2"/>
</dbReference>
<dbReference type="SUPFAM" id="SSF52540">
    <property type="entry name" value="P-loop containing nucleoside triphosphate hydrolases"/>
    <property type="match status" value="1"/>
</dbReference>
<dbReference type="SUPFAM" id="SSF54211">
    <property type="entry name" value="Ribosomal protein S5 domain 2-like"/>
    <property type="match status" value="1"/>
</dbReference>
<dbReference type="SUPFAM" id="SSF50447">
    <property type="entry name" value="Translation proteins"/>
    <property type="match status" value="1"/>
</dbReference>
<dbReference type="PROSITE" id="PS00301">
    <property type="entry name" value="G_TR_1"/>
    <property type="match status" value="1"/>
</dbReference>
<dbReference type="PROSITE" id="PS51722">
    <property type="entry name" value="G_TR_2"/>
    <property type="match status" value="1"/>
</dbReference>